<organism>
    <name type="scientific">Coccidioides immitis (strain RS)</name>
    <name type="common">Valley fever fungus</name>
    <dbReference type="NCBI Taxonomy" id="246410"/>
    <lineage>
        <taxon>Eukaryota</taxon>
        <taxon>Fungi</taxon>
        <taxon>Dikarya</taxon>
        <taxon>Ascomycota</taxon>
        <taxon>Pezizomycotina</taxon>
        <taxon>Eurotiomycetes</taxon>
        <taxon>Eurotiomycetidae</taxon>
        <taxon>Onygenales</taxon>
        <taxon>Onygenaceae</taxon>
        <taxon>Coccidioides</taxon>
    </lineage>
</organism>
<gene>
    <name type="primary">COX23</name>
    <name type="ORF">CIMG_09538</name>
</gene>
<name>COX23_COCIM</name>
<keyword id="KW-1015">Disulfide bond</keyword>
<keyword id="KW-0496">Mitochondrion</keyword>
<keyword id="KW-1185">Reference proteome</keyword>
<keyword id="KW-0809">Transit peptide</keyword>
<sequence>MSAQAGAAQANEDESHKYWGKAEQQFKHKPASQFFDPCQEFADRSIKCMRRNAGDRDMCTDYFQAYRDCKKAWMTQRKEASR</sequence>
<accession>Q1DJH5</accession>
<accession>A0A0D6K9M6</accession>
<accession>J3K0B6</accession>
<feature type="transit peptide" description="Mitochondrion" evidence="3">
    <location>
        <begin position="1"/>
        <end position="13"/>
    </location>
</feature>
<feature type="chain" id="PRO_0000280659" description="Cytochrome c oxidase-assembly factor COX23, mitochondrial">
    <location>
        <begin position="14"/>
        <end position="82"/>
    </location>
</feature>
<feature type="domain" description="CHCH" evidence="4">
    <location>
        <begin position="35"/>
        <end position="77"/>
    </location>
</feature>
<feature type="short sequence motif" description="Cx9C motif 1" evidence="4">
    <location>
        <begin position="38"/>
        <end position="48"/>
    </location>
</feature>
<feature type="short sequence motif" description="Cx9C motif 2" evidence="4">
    <location>
        <begin position="59"/>
        <end position="69"/>
    </location>
</feature>
<feature type="disulfide bond" evidence="4">
    <location>
        <begin position="38"/>
        <end position="69"/>
    </location>
</feature>
<feature type="disulfide bond" evidence="4">
    <location>
        <begin position="48"/>
        <end position="59"/>
    </location>
</feature>
<evidence type="ECO:0000250" key="1"/>
<evidence type="ECO:0000250" key="2">
    <source>
        <dbReference type="UniProtKB" id="P38824"/>
    </source>
</evidence>
<evidence type="ECO:0000255" key="3"/>
<evidence type="ECO:0000255" key="4">
    <source>
        <dbReference type="PROSITE-ProRule" id="PRU01150"/>
    </source>
</evidence>
<evidence type="ECO:0000305" key="5"/>
<proteinExistence type="inferred from homology"/>
<comment type="function">
    <text evidence="2">Required for the assembly of cytochrome c oxidase.</text>
</comment>
<comment type="subcellular location">
    <subcellularLocation>
        <location evidence="1">Mitochondrion intermembrane space</location>
    </subcellularLocation>
</comment>
<comment type="similarity">
    <text evidence="5">Belongs to the COX23 family.</text>
</comment>
<dbReference type="EMBL" id="GG704915">
    <property type="protein sequence ID" value="EAS28334.2"/>
    <property type="molecule type" value="Genomic_DNA"/>
</dbReference>
<dbReference type="RefSeq" id="XP_001239917.2">
    <property type="nucleotide sequence ID" value="XM_001239916.2"/>
</dbReference>
<dbReference type="SMR" id="Q1DJH5"/>
<dbReference type="STRING" id="246410.Q1DJH5"/>
<dbReference type="GeneID" id="4558905"/>
<dbReference type="KEGG" id="cim:CIMG_09538"/>
<dbReference type="VEuPathDB" id="FungiDB:CIMG_09538"/>
<dbReference type="InParanoid" id="Q1DJH5"/>
<dbReference type="OMA" id="GGDRDMC"/>
<dbReference type="OrthoDB" id="9971592at2759"/>
<dbReference type="Proteomes" id="UP000001261">
    <property type="component" value="Unassembled WGS sequence"/>
</dbReference>
<dbReference type="GO" id="GO:0005758">
    <property type="term" value="C:mitochondrial intermembrane space"/>
    <property type="evidence" value="ECO:0007669"/>
    <property type="project" value="UniProtKB-SubCell"/>
</dbReference>
<dbReference type="GO" id="GO:0033108">
    <property type="term" value="P:mitochondrial respiratory chain complex assembly"/>
    <property type="evidence" value="ECO:0007669"/>
    <property type="project" value="TreeGrafter"/>
</dbReference>
<dbReference type="InterPro" id="IPR051040">
    <property type="entry name" value="COX23"/>
</dbReference>
<dbReference type="InterPro" id="IPR009069">
    <property type="entry name" value="Cys_alpha_HP_mot_SF"/>
</dbReference>
<dbReference type="PANTHER" id="PTHR46811">
    <property type="entry name" value="COILED-COIL-HELIX-COILED-COIL-HELIX DOMAIN-CONTAINING PROTEIN 7"/>
    <property type="match status" value="1"/>
</dbReference>
<dbReference type="PANTHER" id="PTHR46811:SF1">
    <property type="entry name" value="COILED-COIL-HELIX-COILED-COIL-HELIX DOMAIN-CONTAINING PROTEIN 7"/>
    <property type="match status" value="1"/>
</dbReference>
<dbReference type="SUPFAM" id="SSF47072">
    <property type="entry name" value="Cysteine alpha-hairpin motif"/>
    <property type="match status" value="1"/>
</dbReference>
<dbReference type="PROSITE" id="PS51808">
    <property type="entry name" value="CHCH"/>
    <property type="match status" value="1"/>
</dbReference>
<protein>
    <recommendedName>
        <fullName>Cytochrome c oxidase-assembly factor COX23, mitochondrial</fullName>
    </recommendedName>
</protein>
<reference key="1">
    <citation type="journal article" date="2009" name="Genome Res.">
        <title>Comparative genomic analyses of the human fungal pathogens Coccidioides and their relatives.</title>
        <authorList>
            <person name="Sharpton T.J."/>
            <person name="Stajich J.E."/>
            <person name="Rounsley S.D."/>
            <person name="Gardner M.J."/>
            <person name="Wortman J.R."/>
            <person name="Jordar V.S."/>
            <person name="Maiti R."/>
            <person name="Kodira C.D."/>
            <person name="Neafsey D.E."/>
            <person name="Zeng Q."/>
            <person name="Hung C.-Y."/>
            <person name="McMahan C."/>
            <person name="Muszewska A."/>
            <person name="Grynberg M."/>
            <person name="Mandel M.A."/>
            <person name="Kellner E.M."/>
            <person name="Barker B.M."/>
            <person name="Galgiani J.N."/>
            <person name="Orbach M.J."/>
            <person name="Kirkland T.N."/>
            <person name="Cole G.T."/>
            <person name="Henn M.R."/>
            <person name="Birren B.W."/>
            <person name="Taylor J.W."/>
        </authorList>
    </citation>
    <scope>NUCLEOTIDE SEQUENCE [LARGE SCALE GENOMIC DNA]</scope>
    <source>
        <strain>RS</strain>
    </source>
</reference>
<reference key="2">
    <citation type="journal article" date="2010" name="Genome Res.">
        <title>Population genomic sequencing of Coccidioides fungi reveals recent hybridization and transposon control.</title>
        <authorList>
            <person name="Neafsey D.E."/>
            <person name="Barker B.M."/>
            <person name="Sharpton T.J."/>
            <person name="Stajich J.E."/>
            <person name="Park D.J."/>
            <person name="Whiston E."/>
            <person name="Hung C.-Y."/>
            <person name="McMahan C."/>
            <person name="White J."/>
            <person name="Sykes S."/>
            <person name="Heiman D."/>
            <person name="Young S."/>
            <person name="Zeng Q."/>
            <person name="Abouelleil A."/>
            <person name="Aftuck L."/>
            <person name="Bessette D."/>
            <person name="Brown A."/>
            <person name="FitzGerald M."/>
            <person name="Lui A."/>
            <person name="Macdonald J.P."/>
            <person name="Priest M."/>
            <person name="Orbach M.J."/>
            <person name="Galgiani J.N."/>
            <person name="Kirkland T.N."/>
            <person name="Cole G.T."/>
            <person name="Birren B.W."/>
            <person name="Henn M.R."/>
            <person name="Taylor J.W."/>
            <person name="Rounsley S.D."/>
        </authorList>
    </citation>
    <scope>GENOME REANNOTATION</scope>
    <source>
        <strain>RS</strain>
    </source>
</reference>